<proteinExistence type="inferred from homology"/>
<organism>
    <name type="scientific">Borrelia duttonii (strain Ly)</name>
    <dbReference type="NCBI Taxonomy" id="412419"/>
    <lineage>
        <taxon>Bacteria</taxon>
        <taxon>Pseudomonadati</taxon>
        <taxon>Spirochaetota</taxon>
        <taxon>Spirochaetia</taxon>
        <taxon>Spirochaetales</taxon>
        <taxon>Borreliaceae</taxon>
        <taxon>Borrelia</taxon>
    </lineage>
</organism>
<reference key="1">
    <citation type="journal article" date="2008" name="PLoS Genet.">
        <title>The genome of Borrelia recurrentis, the agent of deadly louse-borne relapsing fever, is a degraded subset of tick-borne Borrelia duttonii.</title>
        <authorList>
            <person name="Lescot M."/>
            <person name="Audic S."/>
            <person name="Robert C."/>
            <person name="Nguyen T.T."/>
            <person name="Blanc G."/>
            <person name="Cutler S.J."/>
            <person name="Wincker P."/>
            <person name="Couloux A."/>
            <person name="Claverie J.-M."/>
            <person name="Raoult D."/>
            <person name="Drancourt M."/>
        </authorList>
    </citation>
    <scope>NUCLEOTIDE SEQUENCE [LARGE SCALE GENOMIC DNA]</scope>
    <source>
        <strain>Ly</strain>
    </source>
</reference>
<protein>
    <recommendedName>
        <fullName evidence="1">DNA-directed RNA polymerase subunit beta</fullName>
        <shortName evidence="1">RNAP subunit beta</shortName>
        <ecNumber evidence="1">2.7.7.6</ecNumber>
    </recommendedName>
    <alternativeName>
        <fullName evidence="1">RNA polymerase subunit beta</fullName>
    </alternativeName>
    <alternativeName>
        <fullName evidence="1">Transcriptase subunit beta</fullName>
    </alternativeName>
</protein>
<keyword id="KW-0240">DNA-directed RNA polymerase</keyword>
<keyword id="KW-0548">Nucleotidyltransferase</keyword>
<keyword id="KW-0804">Transcription</keyword>
<keyword id="KW-0808">Transferase</keyword>
<accession>B5RLU9</accession>
<name>RPOB_BORDL</name>
<gene>
    <name evidence="1" type="primary">rpoB</name>
    <name type="ordered locus">BDU_383</name>
</gene>
<sequence length="1155" mass="130073">MIKRVHLGQGKAEEILNLPNLIEIQLNSYEKFLQLERLKNNKPLLNEGLESVFRDVFPMKSSNGEVALEYEKYYIEYDSISFTEKECKRKGQSYEAVLKIRLNLQFLTTGEIRQKDVYMGTIPLMTDRGTFIVNGAERVIVSQIHRSPGVVFYKEKDLYYARIIPYRGSWLEFEIDSKKDYLYVKIDRKKRILVTLFLRALGLDTREKIIETFYKIRKIEVNDDTKREITGQYLATNITIKENMTYRAGDKITLQDIEDFLQNGVKEINLIDFDGYDSVPGKHFISSDVILNCFEKEDAYFALKDGFKELSRESVMLAVYSVLLPGEPISIDNAENDLRTVFFSEKRYDLGHVGRYKLSKKFGLDDLTTSVLTMTDIVNTISHLLRIYDGHDVLDDIDHLGNRRVRSVGELLTNIYKGAMSRVEKIAKDRMSNKEVFNLKPQELISVKPVVSAVKEFFATSQLSQFMDQVNPLAELTHKRRLNALGPGGLSRDRAGFEVRDVHYTHYGRMCPIETPEGPNIGLIVSLATYSKVNDYGFLETPYRKVIDGKVTDDIEYLSAIDEEKKCIAQANASVSSDGNYTDDLVSVRISGDYTTMMPKNIDYMDVSPRQLISVSSALIPFLEHNDANRALMGSNMQRQAVPLLFPQPPIVGTGMERIVAKDSGVVIKAKRPGRVVLATNKKIVIKPDNATSERDLDEYELYKYERTNQDTSFNHSVLVKNGQIVNKDEIIADGPATRYGELALGNNLLVGFIPWNGFNYEDAILISERIVKEDLYTSIHIKEFSIEVRETKLGPEKVTADIPNVSGKILSKLDENGIVRIGTYVKPGDILIGKVTPKSEGDITPEFKLLTSIFGEKAKDVKNNSLKVPHGTEGTVIDVQRITKDDVGNLPPGVDEILKVYIAKKRKLKEGDKMAGRHGNKGVVAKILPVEDMPYLADGTPLDICLNPLGVPSRMNIGQLMESQLGLAGKYLGEYYDVPVFESATNECIQEKLKKAGFNETSKAVLYDGYTGEPFENEVMVGVIYMLKLHHLVDDKMHARSTGPYSLVSQQPLGGKAQFGGQRLGEMEVWALEAYGAAHTLQELLTVKSDDMSGRVKIYENIVKGIPTNVSGIPESFNVLMQELRGLGFDLSIYDDNGNQIPLTEKEEELINKT</sequence>
<evidence type="ECO:0000255" key="1">
    <source>
        <dbReference type="HAMAP-Rule" id="MF_01321"/>
    </source>
</evidence>
<comment type="function">
    <text evidence="1">DNA-dependent RNA polymerase catalyzes the transcription of DNA into RNA using the four ribonucleoside triphosphates as substrates.</text>
</comment>
<comment type="catalytic activity">
    <reaction evidence="1">
        <text>RNA(n) + a ribonucleoside 5'-triphosphate = RNA(n+1) + diphosphate</text>
        <dbReference type="Rhea" id="RHEA:21248"/>
        <dbReference type="Rhea" id="RHEA-COMP:14527"/>
        <dbReference type="Rhea" id="RHEA-COMP:17342"/>
        <dbReference type="ChEBI" id="CHEBI:33019"/>
        <dbReference type="ChEBI" id="CHEBI:61557"/>
        <dbReference type="ChEBI" id="CHEBI:140395"/>
        <dbReference type="EC" id="2.7.7.6"/>
    </reaction>
</comment>
<comment type="subunit">
    <text evidence="1">The RNAP catalytic core consists of 2 alpha, 1 beta, 1 beta' and 1 omega subunit. When a sigma factor is associated with the core the holoenzyme is formed, which can initiate transcription.</text>
</comment>
<comment type="similarity">
    <text evidence="1">Belongs to the RNA polymerase beta chain family.</text>
</comment>
<feature type="chain" id="PRO_1000141663" description="DNA-directed RNA polymerase subunit beta">
    <location>
        <begin position="1"/>
        <end position="1155"/>
    </location>
</feature>
<dbReference type="EC" id="2.7.7.6" evidence="1"/>
<dbReference type="EMBL" id="CP000976">
    <property type="protein sequence ID" value="ACH93335.1"/>
    <property type="molecule type" value="Genomic_DNA"/>
</dbReference>
<dbReference type="RefSeq" id="WP_012538146.1">
    <property type="nucleotide sequence ID" value="NC_011229.1"/>
</dbReference>
<dbReference type="SMR" id="B5RLU9"/>
<dbReference type="STRING" id="412419.BDU_383"/>
<dbReference type="KEGG" id="bdu:BDU_383"/>
<dbReference type="eggNOG" id="COG0085">
    <property type="taxonomic scope" value="Bacteria"/>
</dbReference>
<dbReference type="HOGENOM" id="CLU_000524_4_3_12"/>
<dbReference type="OrthoDB" id="9803954at2"/>
<dbReference type="Proteomes" id="UP000000611">
    <property type="component" value="Chromosome"/>
</dbReference>
<dbReference type="GO" id="GO:0000428">
    <property type="term" value="C:DNA-directed RNA polymerase complex"/>
    <property type="evidence" value="ECO:0007669"/>
    <property type="project" value="UniProtKB-KW"/>
</dbReference>
<dbReference type="GO" id="GO:0003677">
    <property type="term" value="F:DNA binding"/>
    <property type="evidence" value="ECO:0007669"/>
    <property type="project" value="UniProtKB-UniRule"/>
</dbReference>
<dbReference type="GO" id="GO:0003899">
    <property type="term" value="F:DNA-directed RNA polymerase activity"/>
    <property type="evidence" value="ECO:0007669"/>
    <property type="project" value="UniProtKB-UniRule"/>
</dbReference>
<dbReference type="GO" id="GO:0032549">
    <property type="term" value="F:ribonucleoside binding"/>
    <property type="evidence" value="ECO:0007669"/>
    <property type="project" value="InterPro"/>
</dbReference>
<dbReference type="GO" id="GO:0006351">
    <property type="term" value="P:DNA-templated transcription"/>
    <property type="evidence" value="ECO:0007669"/>
    <property type="project" value="UniProtKB-UniRule"/>
</dbReference>
<dbReference type="CDD" id="cd00653">
    <property type="entry name" value="RNA_pol_B_RPB2"/>
    <property type="match status" value="1"/>
</dbReference>
<dbReference type="Gene3D" id="2.40.50.100">
    <property type="match status" value="1"/>
</dbReference>
<dbReference type="Gene3D" id="2.40.50.150">
    <property type="match status" value="1"/>
</dbReference>
<dbReference type="Gene3D" id="3.90.1100.10">
    <property type="match status" value="1"/>
</dbReference>
<dbReference type="Gene3D" id="2.30.150.10">
    <property type="entry name" value="DNA-directed RNA polymerase, beta subunit, external 1 domain"/>
    <property type="match status" value="1"/>
</dbReference>
<dbReference type="Gene3D" id="2.40.270.10">
    <property type="entry name" value="DNA-directed RNA polymerase, subunit 2, domain 6"/>
    <property type="match status" value="1"/>
</dbReference>
<dbReference type="Gene3D" id="3.90.1800.10">
    <property type="entry name" value="RNA polymerase alpha subunit dimerisation domain"/>
    <property type="match status" value="1"/>
</dbReference>
<dbReference type="Gene3D" id="3.90.1110.10">
    <property type="entry name" value="RNA polymerase Rpb2, domain 2"/>
    <property type="match status" value="1"/>
</dbReference>
<dbReference type="HAMAP" id="MF_01321">
    <property type="entry name" value="RNApol_bact_RpoB"/>
    <property type="match status" value="1"/>
</dbReference>
<dbReference type="InterPro" id="IPR042107">
    <property type="entry name" value="DNA-dir_RNA_pol_bsu_ext_1_sf"/>
</dbReference>
<dbReference type="InterPro" id="IPR019462">
    <property type="entry name" value="DNA-dir_RNA_pol_bsu_external_1"/>
</dbReference>
<dbReference type="InterPro" id="IPR015712">
    <property type="entry name" value="DNA-dir_RNA_pol_su2"/>
</dbReference>
<dbReference type="InterPro" id="IPR007120">
    <property type="entry name" value="DNA-dir_RNAP_su2_dom"/>
</dbReference>
<dbReference type="InterPro" id="IPR037033">
    <property type="entry name" value="DNA-dir_RNAP_su2_hyb_sf"/>
</dbReference>
<dbReference type="InterPro" id="IPR010243">
    <property type="entry name" value="RNA_pol_bsu_bac"/>
</dbReference>
<dbReference type="InterPro" id="IPR007121">
    <property type="entry name" value="RNA_pol_bsu_CS"/>
</dbReference>
<dbReference type="InterPro" id="IPR007644">
    <property type="entry name" value="RNA_pol_bsu_protrusion"/>
</dbReference>
<dbReference type="InterPro" id="IPR007642">
    <property type="entry name" value="RNA_pol_Rpb2_2"/>
</dbReference>
<dbReference type="InterPro" id="IPR037034">
    <property type="entry name" value="RNA_pol_Rpb2_2_sf"/>
</dbReference>
<dbReference type="InterPro" id="IPR007645">
    <property type="entry name" value="RNA_pol_Rpb2_3"/>
</dbReference>
<dbReference type="InterPro" id="IPR007641">
    <property type="entry name" value="RNA_pol_Rpb2_7"/>
</dbReference>
<dbReference type="InterPro" id="IPR014724">
    <property type="entry name" value="RNA_pol_RPB2_OB-fold"/>
</dbReference>
<dbReference type="NCBIfam" id="NF001616">
    <property type="entry name" value="PRK00405.1"/>
    <property type="match status" value="1"/>
</dbReference>
<dbReference type="NCBIfam" id="TIGR02013">
    <property type="entry name" value="rpoB"/>
    <property type="match status" value="1"/>
</dbReference>
<dbReference type="PANTHER" id="PTHR20856">
    <property type="entry name" value="DNA-DIRECTED RNA POLYMERASE I SUBUNIT 2"/>
    <property type="match status" value="1"/>
</dbReference>
<dbReference type="Pfam" id="PF04563">
    <property type="entry name" value="RNA_pol_Rpb2_1"/>
    <property type="match status" value="1"/>
</dbReference>
<dbReference type="Pfam" id="PF04561">
    <property type="entry name" value="RNA_pol_Rpb2_2"/>
    <property type="match status" value="2"/>
</dbReference>
<dbReference type="Pfam" id="PF04565">
    <property type="entry name" value="RNA_pol_Rpb2_3"/>
    <property type="match status" value="1"/>
</dbReference>
<dbReference type="Pfam" id="PF10385">
    <property type="entry name" value="RNA_pol_Rpb2_45"/>
    <property type="match status" value="1"/>
</dbReference>
<dbReference type="Pfam" id="PF00562">
    <property type="entry name" value="RNA_pol_Rpb2_6"/>
    <property type="match status" value="1"/>
</dbReference>
<dbReference type="Pfam" id="PF04560">
    <property type="entry name" value="RNA_pol_Rpb2_7"/>
    <property type="match status" value="1"/>
</dbReference>
<dbReference type="SUPFAM" id="SSF64484">
    <property type="entry name" value="beta and beta-prime subunits of DNA dependent RNA-polymerase"/>
    <property type="match status" value="1"/>
</dbReference>
<dbReference type="PROSITE" id="PS01166">
    <property type="entry name" value="RNA_POL_BETA"/>
    <property type="match status" value="1"/>
</dbReference>